<dbReference type="EC" id="5.4.99.12" evidence="1"/>
<dbReference type="EMBL" id="Y09141">
    <property type="protein sequence ID" value="CAA70351.1"/>
    <property type="molecule type" value="Genomic_DNA"/>
</dbReference>
<dbReference type="EMBL" id="AJ224474">
    <property type="protein sequence ID" value="CAA11967.1"/>
    <property type="molecule type" value="Genomic_DNA"/>
</dbReference>
<dbReference type="EMBL" id="AE000783">
    <property type="protein sequence ID" value="AAC66394.1"/>
    <property type="molecule type" value="Genomic_DNA"/>
</dbReference>
<dbReference type="PIR" id="D70101">
    <property type="entry name" value="D70101"/>
</dbReference>
<dbReference type="RefSeq" id="NP_212146.1">
    <property type="nucleotide sequence ID" value="NC_001318.1"/>
</dbReference>
<dbReference type="RefSeq" id="WP_010889660.1">
    <property type="nucleotide sequence ID" value="NC_001318.1"/>
</dbReference>
<dbReference type="SMR" id="P70830"/>
<dbReference type="STRING" id="224326.BB_0012"/>
<dbReference type="PaxDb" id="224326-BB_0012"/>
<dbReference type="EnsemblBacteria" id="AAC66394">
    <property type="protein sequence ID" value="AAC66394"/>
    <property type="gene ID" value="BB_0012"/>
</dbReference>
<dbReference type="KEGG" id="bbu:BB_0012"/>
<dbReference type="PATRIC" id="fig|224326.49.peg.410"/>
<dbReference type="HOGENOM" id="CLU_014673_0_1_12"/>
<dbReference type="OrthoDB" id="9811823at2"/>
<dbReference type="Proteomes" id="UP000001807">
    <property type="component" value="Chromosome"/>
</dbReference>
<dbReference type="GO" id="GO:0003723">
    <property type="term" value="F:RNA binding"/>
    <property type="evidence" value="ECO:0007669"/>
    <property type="project" value="InterPro"/>
</dbReference>
<dbReference type="GO" id="GO:0160147">
    <property type="term" value="F:tRNA pseudouridine(38-40) synthase activity"/>
    <property type="evidence" value="ECO:0007669"/>
    <property type="project" value="UniProtKB-EC"/>
</dbReference>
<dbReference type="GO" id="GO:0031119">
    <property type="term" value="P:tRNA pseudouridine synthesis"/>
    <property type="evidence" value="ECO:0007669"/>
    <property type="project" value="UniProtKB-UniRule"/>
</dbReference>
<dbReference type="CDD" id="cd02570">
    <property type="entry name" value="PseudoU_synth_EcTruA"/>
    <property type="match status" value="1"/>
</dbReference>
<dbReference type="FunFam" id="3.30.70.580:FF:000001">
    <property type="entry name" value="tRNA pseudouridine synthase A"/>
    <property type="match status" value="1"/>
</dbReference>
<dbReference type="Gene3D" id="3.30.70.660">
    <property type="entry name" value="Pseudouridine synthase I, catalytic domain, C-terminal subdomain"/>
    <property type="match status" value="1"/>
</dbReference>
<dbReference type="Gene3D" id="3.30.70.580">
    <property type="entry name" value="Pseudouridine synthase I, catalytic domain, N-terminal subdomain"/>
    <property type="match status" value="1"/>
</dbReference>
<dbReference type="HAMAP" id="MF_00171">
    <property type="entry name" value="TruA"/>
    <property type="match status" value="1"/>
</dbReference>
<dbReference type="InterPro" id="IPR020103">
    <property type="entry name" value="PsdUridine_synth_cat_dom_sf"/>
</dbReference>
<dbReference type="InterPro" id="IPR001406">
    <property type="entry name" value="PsdUridine_synth_TruA"/>
</dbReference>
<dbReference type="InterPro" id="IPR020097">
    <property type="entry name" value="PsdUridine_synth_TruA_a/b_dom"/>
</dbReference>
<dbReference type="InterPro" id="IPR020095">
    <property type="entry name" value="PsdUridine_synth_TruA_C"/>
</dbReference>
<dbReference type="InterPro" id="IPR020094">
    <property type="entry name" value="TruA/RsuA/RluB/E/F_N"/>
</dbReference>
<dbReference type="NCBIfam" id="TIGR00071">
    <property type="entry name" value="hisT_truA"/>
    <property type="match status" value="1"/>
</dbReference>
<dbReference type="PANTHER" id="PTHR11142">
    <property type="entry name" value="PSEUDOURIDYLATE SYNTHASE"/>
    <property type="match status" value="1"/>
</dbReference>
<dbReference type="PANTHER" id="PTHR11142:SF0">
    <property type="entry name" value="TRNA PSEUDOURIDINE SYNTHASE-LIKE 1"/>
    <property type="match status" value="1"/>
</dbReference>
<dbReference type="Pfam" id="PF01416">
    <property type="entry name" value="PseudoU_synth_1"/>
    <property type="match status" value="2"/>
</dbReference>
<dbReference type="PIRSF" id="PIRSF001430">
    <property type="entry name" value="tRNA_psdUrid_synth"/>
    <property type="match status" value="1"/>
</dbReference>
<dbReference type="SUPFAM" id="SSF55120">
    <property type="entry name" value="Pseudouridine synthase"/>
    <property type="match status" value="1"/>
</dbReference>
<comment type="function">
    <text evidence="1">Formation of pseudouridine at positions 38, 39 and 40 in the anticodon stem and loop of transfer RNAs.</text>
</comment>
<comment type="catalytic activity">
    <reaction evidence="1">
        <text>uridine(38/39/40) in tRNA = pseudouridine(38/39/40) in tRNA</text>
        <dbReference type="Rhea" id="RHEA:22376"/>
        <dbReference type="Rhea" id="RHEA-COMP:10085"/>
        <dbReference type="Rhea" id="RHEA-COMP:10087"/>
        <dbReference type="ChEBI" id="CHEBI:65314"/>
        <dbReference type="ChEBI" id="CHEBI:65315"/>
        <dbReference type="EC" id="5.4.99.12"/>
    </reaction>
</comment>
<comment type="subunit">
    <text evidence="1">Homodimer.</text>
</comment>
<comment type="similarity">
    <text evidence="1">Belongs to the tRNA pseudouridine synthase TruA family.</text>
</comment>
<evidence type="ECO:0000255" key="1">
    <source>
        <dbReference type="HAMAP-Rule" id="MF_00171"/>
    </source>
</evidence>
<evidence type="ECO:0000305" key="2"/>
<gene>
    <name evidence="1" type="primary">truA</name>
    <name type="ordered locus">BB_0012</name>
</gene>
<sequence>MKKILAEIAYDGSIYHGFQIQPTKPTVQGEIEKALMKINKKKVKIHSSGRTDKGVHAKKQIITFDIKINIQLNNLKKALNAILLKNSIKILKLRYVKNSFHPRFSAQKRKYSYCILNSDNYYPWEGYQAHYVNKKLSISNLNQMAKTLIGKHDFTTFSCIKDKSKSKFRHIYFAKFKKRGKYIIFEIIGSSFLWKMVRSIIGTMLDIEIKNESISTFETILKSKNRNLARTTAPANALFLERVYYE</sequence>
<protein>
    <recommendedName>
        <fullName evidence="1">tRNA pseudouridine synthase A</fullName>
        <ecNumber evidence="1">5.4.99.12</ecNumber>
    </recommendedName>
    <alternativeName>
        <fullName evidence="1">tRNA pseudouridine(38-40) synthase</fullName>
    </alternativeName>
    <alternativeName>
        <fullName evidence="1">tRNA pseudouridylate synthase I</fullName>
    </alternativeName>
    <alternativeName>
        <fullName evidence="1">tRNA-uridine isomerase I</fullName>
    </alternativeName>
</protein>
<accession>P70830</accession>
<accession>O51045</accession>
<name>TRUA_BORBU</name>
<reference key="1">
    <citation type="submission" date="1996-11" db="EMBL/GenBank/DDBJ databases">
        <authorList>
            <person name="Boursaux-Eude C."/>
            <person name="Margarita D."/>
            <person name="Belfaiza J."/>
            <person name="Old I.G."/>
            <person name="Saint-Girons I."/>
        </authorList>
    </citation>
    <scope>NUCLEOTIDE SEQUENCE [GENOMIC DNA]</scope>
    <source>
        <strain>HB19</strain>
    </source>
</reference>
<reference key="2">
    <citation type="journal article" date="1997" name="Nature">
        <title>Genomic sequence of a Lyme disease spirochaete, Borrelia burgdorferi.</title>
        <authorList>
            <person name="Fraser C.M."/>
            <person name="Casjens S."/>
            <person name="Huang W.M."/>
            <person name="Sutton G.G."/>
            <person name="Clayton R.A."/>
            <person name="Lathigra R."/>
            <person name="White O."/>
            <person name="Ketchum K.A."/>
            <person name="Dodson R.J."/>
            <person name="Hickey E.K."/>
            <person name="Gwinn M.L."/>
            <person name="Dougherty B.A."/>
            <person name="Tomb J.-F."/>
            <person name="Fleischmann R.D."/>
            <person name="Richardson D.L."/>
            <person name="Peterson J.D."/>
            <person name="Kerlavage A.R."/>
            <person name="Quackenbush J."/>
            <person name="Salzberg S.L."/>
            <person name="Hanson M."/>
            <person name="van Vugt R."/>
            <person name="Palmer N."/>
            <person name="Adams M.D."/>
            <person name="Gocayne J.D."/>
            <person name="Weidman J.F."/>
            <person name="Utterback T.R."/>
            <person name="Watthey L."/>
            <person name="McDonald L.A."/>
            <person name="Artiach P."/>
            <person name="Bowman C."/>
            <person name="Garland S.A."/>
            <person name="Fujii C."/>
            <person name="Cotton M.D."/>
            <person name="Horst K."/>
            <person name="Roberts K.M."/>
            <person name="Hatch B."/>
            <person name="Smith H.O."/>
            <person name="Venter J.C."/>
        </authorList>
    </citation>
    <scope>NUCLEOTIDE SEQUENCE [LARGE SCALE GENOMIC DNA]</scope>
    <source>
        <strain>ATCC 35210 / DSM 4680 / CIP 102532 / B31</strain>
    </source>
</reference>
<proteinExistence type="inferred from homology"/>
<feature type="chain" id="PRO_0000057341" description="tRNA pseudouridine synthase A">
    <location>
        <begin position="1"/>
        <end position="246"/>
    </location>
</feature>
<feature type="active site" description="Nucleophile" evidence="1">
    <location>
        <position position="52"/>
    </location>
</feature>
<feature type="binding site" evidence="1">
    <location>
        <position position="111"/>
    </location>
    <ligand>
        <name>substrate</name>
    </ligand>
</feature>
<feature type="sequence conflict" description="In Ref. 1; CAA70351/CAA11967." evidence="2" ref="1">
    <original>K</original>
    <variation>R</variation>
    <location>
        <position position="59"/>
    </location>
</feature>
<feature type="sequence conflict" description="In Ref. 1; CAA70351/CAA11967." evidence="2" ref="1">
    <original>I</original>
    <variation>M</variation>
    <location>
        <position position="201"/>
    </location>
</feature>
<organism>
    <name type="scientific">Borreliella burgdorferi (strain ATCC 35210 / DSM 4680 / CIP 102532 / B31)</name>
    <name type="common">Borrelia burgdorferi</name>
    <dbReference type="NCBI Taxonomy" id="224326"/>
    <lineage>
        <taxon>Bacteria</taxon>
        <taxon>Pseudomonadati</taxon>
        <taxon>Spirochaetota</taxon>
        <taxon>Spirochaetia</taxon>
        <taxon>Spirochaetales</taxon>
        <taxon>Borreliaceae</taxon>
        <taxon>Borreliella</taxon>
    </lineage>
</organism>
<keyword id="KW-0413">Isomerase</keyword>
<keyword id="KW-1185">Reference proteome</keyword>
<keyword id="KW-0819">tRNA processing</keyword>